<evidence type="ECO:0000250" key="1"/>
<evidence type="ECO:0000250" key="2">
    <source>
        <dbReference type="UniProtKB" id="Q99627"/>
    </source>
</evidence>
<evidence type="ECO:0000255" key="3">
    <source>
        <dbReference type="PROSITE-ProRule" id="PRU01185"/>
    </source>
</evidence>
<evidence type="ECO:0000269" key="4">
    <source>
    </source>
</evidence>
<evidence type="ECO:0000269" key="5">
    <source>
    </source>
</evidence>
<evidence type="ECO:0000305" key="6"/>
<proteinExistence type="evidence at protein level"/>
<reference key="1">
    <citation type="journal article" date="2003" name="Gene">
        <title>Gene structure and embryonic expression of mouse COP9 signalosome subunit 8 (Csn8).</title>
        <authorList>
            <person name="Lykke-Andersen K."/>
            <person name="Wei N."/>
        </authorList>
    </citation>
    <scope>NUCLEOTIDE SEQUENCE [GENOMIC DNA / MRNA]</scope>
    <scope>TISSUE SPECIFICITY</scope>
    <scope>DEVELOPMENTAL STAGE</scope>
    <source>
        <strain>129/SvJ</strain>
    </source>
</reference>
<reference key="2">
    <citation type="journal article" date="2005" name="Science">
        <title>The transcriptional landscape of the mammalian genome.</title>
        <authorList>
            <person name="Carninci P."/>
            <person name="Kasukawa T."/>
            <person name="Katayama S."/>
            <person name="Gough J."/>
            <person name="Frith M.C."/>
            <person name="Maeda N."/>
            <person name="Oyama R."/>
            <person name="Ravasi T."/>
            <person name="Lenhard B."/>
            <person name="Wells C."/>
            <person name="Kodzius R."/>
            <person name="Shimokawa K."/>
            <person name="Bajic V.B."/>
            <person name="Brenner S.E."/>
            <person name="Batalov S."/>
            <person name="Forrest A.R."/>
            <person name="Zavolan M."/>
            <person name="Davis M.J."/>
            <person name="Wilming L.G."/>
            <person name="Aidinis V."/>
            <person name="Allen J.E."/>
            <person name="Ambesi-Impiombato A."/>
            <person name="Apweiler R."/>
            <person name="Aturaliya R.N."/>
            <person name="Bailey T.L."/>
            <person name="Bansal M."/>
            <person name="Baxter L."/>
            <person name="Beisel K.W."/>
            <person name="Bersano T."/>
            <person name="Bono H."/>
            <person name="Chalk A.M."/>
            <person name="Chiu K.P."/>
            <person name="Choudhary V."/>
            <person name="Christoffels A."/>
            <person name="Clutterbuck D.R."/>
            <person name="Crowe M.L."/>
            <person name="Dalla E."/>
            <person name="Dalrymple B.P."/>
            <person name="de Bono B."/>
            <person name="Della Gatta G."/>
            <person name="di Bernardo D."/>
            <person name="Down T."/>
            <person name="Engstrom P."/>
            <person name="Fagiolini M."/>
            <person name="Faulkner G."/>
            <person name="Fletcher C.F."/>
            <person name="Fukushima T."/>
            <person name="Furuno M."/>
            <person name="Futaki S."/>
            <person name="Gariboldi M."/>
            <person name="Georgii-Hemming P."/>
            <person name="Gingeras T.R."/>
            <person name="Gojobori T."/>
            <person name="Green R.E."/>
            <person name="Gustincich S."/>
            <person name="Harbers M."/>
            <person name="Hayashi Y."/>
            <person name="Hensch T.K."/>
            <person name="Hirokawa N."/>
            <person name="Hill D."/>
            <person name="Huminiecki L."/>
            <person name="Iacono M."/>
            <person name="Ikeo K."/>
            <person name="Iwama A."/>
            <person name="Ishikawa T."/>
            <person name="Jakt M."/>
            <person name="Kanapin A."/>
            <person name="Katoh M."/>
            <person name="Kawasawa Y."/>
            <person name="Kelso J."/>
            <person name="Kitamura H."/>
            <person name="Kitano H."/>
            <person name="Kollias G."/>
            <person name="Krishnan S.P."/>
            <person name="Kruger A."/>
            <person name="Kummerfeld S.K."/>
            <person name="Kurochkin I.V."/>
            <person name="Lareau L.F."/>
            <person name="Lazarevic D."/>
            <person name="Lipovich L."/>
            <person name="Liu J."/>
            <person name="Liuni S."/>
            <person name="McWilliam S."/>
            <person name="Madan Babu M."/>
            <person name="Madera M."/>
            <person name="Marchionni L."/>
            <person name="Matsuda H."/>
            <person name="Matsuzawa S."/>
            <person name="Miki H."/>
            <person name="Mignone F."/>
            <person name="Miyake S."/>
            <person name="Morris K."/>
            <person name="Mottagui-Tabar S."/>
            <person name="Mulder N."/>
            <person name="Nakano N."/>
            <person name="Nakauchi H."/>
            <person name="Ng P."/>
            <person name="Nilsson R."/>
            <person name="Nishiguchi S."/>
            <person name="Nishikawa S."/>
            <person name="Nori F."/>
            <person name="Ohara O."/>
            <person name="Okazaki Y."/>
            <person name="Orlando V."/>
            <person name="Pang K.C."/>
            <person name="Pavan W.J."/>
            <person name="Pavesi G."/>
            <person name="Pesole G."/>
            <person name="Petrovsky N."/>
            <person name="Piazza S."/>
            <person name="Reed J."/>
            <person name="Reid J.F."/>
            <person name="Ring B.Z."/>
            <person name="Ringwald M."/>
            <person name="Rost B."/>
            <person name="Ruan Y."/>
            <person name="Salzberg S.L."/>
            <person name="Sandelin A."/>
            <person name="Schneider C."/>
            <person name="Schoenbach C."/>
            <person name="Sekiguchi K."/>
            <person name="Semple C.A."/>
            <person name="Seno S."/>
            <person name="Sessa L."/>
            <person name="Sheng Y."/>
            <person name="Shibata Y."/>
            <person name="Shimada H."/>
            <person name="Shimada K."/>
            <person name="Silva D."/>
            <person name="Sinclair B."/>
            <person name="Sperling S."/>
            <person name="Stupka E."/>
            <person name="Sugiura K."/>
            <person name="Sultana R."/>
            <person name="Takenaka Y."/>
            <person name="Taki K."/>
            <person name="Tammoja K."/>
            <person name="Tan S.L."/>
            <person name="Tang S."/>
            <person name="Taylor M.S."/>
            <person name="Tegner J."/>
            <person name="Teichmann S.A."/>
            <person name="Ueda H.R."/>
            <person name="van Nimwegen E."/>
            <person name="Verardo R."/>
            <person name="Wei C.L."/>
            <person name="Yagi K."/>
            <person name="Yamanishi H."/>
            <person name="Zabarovsky E."/>
            <person name="Zhu S."/>
            <person name="Zimmer A."/>
            <person name="Hide W."/>
            <person name="Bult C."/>
            <person name="Grimmond S.M."/>
            <person name="Teasdale R.D."/>
            <person name="Liu E.T."/>
            <person name="Brusic V."/>
            <person name="Quackenbush J."/>
            <person name="Wahlestedt C."/>
            <person name="Mattick J.S."/>
            <person name="Hume D.A."/>
            <person name="Kai C."/>
            <person name="Sasaki D."/>
            <person name="Tomaru Y."/>
            <person name="Fukuda S."/>
            <person name="Kanamori-Katayama M."/>
            <person name="Suzuki M."/>
            <person name="Aoki J."/>
            <person name="Arakawa T."/>
            <person name="Iida J."/>
            <person name="Imamura K."/>
            <person name="Itoh M."/>
            <person name="Kato T."/>
            <person name="Kawaji H."/>
            <person name="Kawagashira N."/>
            <person name="Kawashima T."/>
            <person name="Kojima M."/>
            <person name="Kondo S."/>
            <person name="Konno H."/>
            <person name="Nakano K."/>
            <person name="Ninomiya N."/>
            <person name="Nishio T."/>
            <person name="Okada M."/>
            <person name="Plessy C."/>
            <person name="Shibata K."/>
            <person name="Shiraki T."/>
            <person name="Suzuki S."/>
            <person name="Tagami M."/>
            <person name="Waki K."/>
            <person name="Watahiki A."/>
            <person name="Okamura-Oho Y."/>
            <person name="Suzuki H."/>
            <person name="Kawai J."/>
            <person name="Hayashizaki Y."/>
        </authorList>
    </citation>
    <scope>NUCLEOTIDE SEQUENCE [LARGE SCALE MRNA]</scope>
    <source>
        <strain>BALB/cJ</strain>
        <strain>C57BL/6J</strain>
        <strain>NOD</strain>
        <tissue>Embryo</tissue>
        <tissue>Hypothalamus</tissue>
        <tissue>Placenta</tissue>
        <tissue>Thymus</tissue>
        <tissue>Urinary bladder</tissue>
    </source>
</reference>
<reference key="3">
    <citation type="journal article" date="2004" name="Genome Res.">
        <title>The status, quality, and expansion of the NIH full-length cDNA project: the Mammalian Gene Collection (MGC).</title>
        <authorList>
            <consortium name="The MGC Project Team"/>
        </authorList>
    </citation>
    <scope>NUCLEOTIDE SEQUENCE [LARGE SCALE MRNA]</scope>
    <source>
        <strain>FVB/N</strain>
        <tissue>Colon</tissue>
        <tissue>Kidney</tissue>
        <tissue>Mammary tumor</tissue>
    </source>
</reference>
<reference key="4">
    <citation type="journal article" date="1998" name="Curr. Biol.">
        <title>The COP9 complex is conserved between plants and mammals and is related to the 26S proteasome regulatory complex.</title>
        <authorList>
            <person name="Wei N."/>
            <person name="Tsuge T."/>
            <person name="Serino G."/>
            <person name="Dohmae N."/>
            <person name="Takio K."/>
            <person name="Matsui M."/>
            <person name="Deng X.-W."/>
        </authorList>
    </citation>
    <scope>IDENTIFICATION IN THE CSN COMPLEX</scope>
    <source>
        <strain>C57BL/6J</strain>
    </source>
</reference>
<reference key="5">
    <citation type="journal article" date="2010" name="Cell">
        <title>A tissue-specific atlas of mouse protein phosphorylation and expression.</title>
        <authorList>
            <person name="Huttlin E.L."/>
            <person name="Jedrychowski M.P."/>
            <person name="Elias J.E."/>
            <person name="Goswami T."/>
            <person name="Rad R."/>
            <person name="Beausoleil S.A."/>
            <person name="Villen J."/>
            <person name="Haas W."/>
            <person name="Sowa M.E."/>
            <person name="Gygi S.P."/>
        </authorList>
    </citation>
    <scope>IDENTIFICATION BY MASS SPECTROMETRY [LARGE SCALE ANALYSIS]</scope>
    <source>
        <tissue>Brain</tissue>
        <tissue>Brown adipose tissue</tissue>
        <tissue>Heart</tissue>
        <tissue>Kidney</tissue>
        <tissue>Liver</tissue>
        <tissue>Lung</tissue>
        <tissue>Pancreas</tissue>
        <tissue>Spleen</tissue>
        <tissue>Testis</tissue>
    </source>
</reference>
<keyword id="KW-0963">Cytoplasm</keyword>
<keyword id="KW-0539">Nucleus</keyword>
<keyword id="KW-0597">Phosphoprotein</keyword>
<keyword id="KW-1185">Reference proteome</keyword>
<keyword id="KW-0736">Signalosome</keyword>
<comment type="function">
    <text evidence="1">Component of the COP9 signalosome complex (CSN), a complex involved in various cellular and developmental processes. The CSN complex is an essential regulator of the ubiquitin (Ubl) conjugation pathway by mediating the deneddylation of the cullin subunits of SCF-type E3 ligase complexes, leading to decrease the Ubl ligase activity of SCF-type complexes such as SCF, CSA or DDB2. The complex is also involved in phosphorylation of p53/TP53, c-jun/JUN, IkappaBalpha/NFKBIA, ITPK1 and IRF8/ICSBP, possibly via its association with CK2 and PKD kinases. CSN-dependent phosphorylation of TP53 and JUN promotes and protects degradation by the Ubl system, respectively (By similarity).</text>
</comment>
<comment type="subunit">
    <text evidence="2 5">Component of the CSN complex, composed of COPS1/GPS1, COPS2, COPS3, COPS4, COPS5, COPS6, COPS7 (COPS7A or COPS7B), COPS8 and COPS9 (PubMed:9707402). In the complex, it probably interacts directly with COPS3, COPS4 and COPS7 (COPS7A or COPS7B) (By similarity).</text>
</comment>
<comment type="subcellular location">
    <subcellularLocation>
        <location evidence="1">Cytoplasm</location>
    </subcellularLocation>
    <subcellularLocation>
        <location evidence="1">Nucleus</location>
    </subcellularLocation>
</comment>
<comment type="tissue specificity">
    <text evidence="4">Widely expressed.</text>
</comment>
<comment type="developmental stage">
    <text evidence="4">Expressed in embryonic stem (ES) cells and throughout early embryo development from zygote, preimplantation embryos, to post-implantation embryos. Predominantly expressed in the inner cell mass (ICM) of 3.5 dpc blastocyst and widely expressed in 9.5 dpc embryos.</text>
</comment>
<comment type="similarity">
    <text evidence="6">Belongs to the CSN8 family.</text>
</comment>
<name>CSN8_MOUSE</name>
<dbReference type="EMBL" id="AF482000">
    <property type="protein sequence ID" value="AAL89689.1"/>
    <property type="molecule type" value="mRNA"/>
</dbReference>
<dbReference type="EMBL" id="AF502144">
    <property type="protein sequence ID" value="AAP13731.1"/>
    <property type="molecule type" value="Genomic_DNA"/>
</dbReference>
<dbReference type="EMBL" id="AK079111">
    <property type="protein sequence ID" value="BAC37543.1"/>
    <property type="molecule type" value="mRNA"/>
</dbReference>
<dbReference type="EMBL" id="AK079522">
    <property type="protein sequence ID" value="BAC37670.1"/>
    <property type="molecule type" value="mRNA"/>
</dbReference>
<dbReference type="EMBL" id="AK088323">
    <property type="protein sequence ID" value="BAC40281.1"/>
    <property type="molecule type" value="mRNA"/>
</dbReference>
<dbReference type="EMBL" id="AK090013">
    <property type="protein sequence ID" value="BAC41045.1"/>
    <property type="molecule type" value="mRNA"/>
</dbReference>
<dbReference type="EMBL" id="AK145899">
    <property type="protein sequence ID" value="BAE26735.1"/>
    <property type="molecule type" value="mRNA"/>
</dbReference>
<dbReference type="EMBL" id="AK162502">
    <property type="protein sequence ID" value="BAE36948.1"/>
    <property type="molecule type" value="mRNA"/>
</dbReference>
<dbReference type="EMBL" id="BC017690">
    <property type="protein sequence ID" value="AAH17690.1"/>
    <property type="molecule type" value="mRNA"/>
</dbReference>
<dbReference type="EMBL" id="BC021488">
    <property type="protein sequence ID" value="AAH21488.1"/>
    <property type="molecule type" value="mRNA"/>
</dbReference>
<dbReference type="EMBL" id="BC024421">
    <property type="protein sequence ID" value="AAH24421.1"/>
    <property type="molecule type" value="mRNA"/>
</dbReference>
<dbReference type="CCDS" id="CCDS15153.1"/>
<dbReference type="RefSeq" id="NP_598566.3">
    <property type="nucleotide sequence ID" value="NM_133805.3"/>
</dbReference>
<dbReference type="SMR" id="Q8VBV7"/>
<dbReference type="BioGRID" id="224368">
    <property type="interactions" value="42"/>
</dbReference>
<dbReference type="CORUM" id="Q8VBV7"/>
<dbReference type="FunCoup" id="Q8VBV7">
    <property type="interactions" value="4600"/>
</dbReference>
<dbReference type="IntAct" id="Q8VBV7">
    <property type="interactions" value="2"/>
</dbReference>
<dbReference type="MINT" id="Q8VBV7"/>
<dbReference type="STRING" id="10090.ENSMUSP00000035884"/>
<dbReference type="GlyGen" id="Q8VBV7">
    <property type="glycosylation" value="1 site, 1 O-linked glycan (1 site)"/>
</dbReference>
<dbReference type="iPTMnet" id="Q8VBV7"/>
<dbReference type="PhosphoSitePlus" id="Q8VBV7"/>
<dbReference type="SwissPalm" id="Q8VBV7"/>
<dbReference type="REPRODUCTION-2DPAGE" id="Q8VBV7"/>
<dbReference type="jPOST" id="Q8VBV7"/>
<dbReference type="PaxDb" id="10090-ENSMUSP00000035884"/>
<dbReference type="PeptideAtlas" id="Q8VBV7"/>
<dbReference type="ProteomicsDB" id="285330"/>
<dbReference type="Pumba" id="Q8VBV7"/>
<dbReference type="TopDownProteomics" id="Q8VBV7"/>
<dbReference type="Antibodypedia" id="34471">
    <property type="antibodies" value="253 antibodies from 36 providers"/>
</dbReference>
<dbReference type="DNASU" id="108679"/>
<dbReference type="Ensembl" id="ENSMUST00000036153.12">
    <property type="protein sequence ID" value="ENSMUSP00000035884.6"/>
    <property type="gene ID" value="ENSMUSG00000034432.12"/>
</dbReference>
<dbReference type="GeneID" id="108679"/>
<dbReference type="KEGG" id="mmu:108679"/>
<dbReference type="UCSC" id="uc007bzi.1">
    <property type="organism name" value="mouse"/>
</dbReference>
<dbReference type="AGR" id="MGI:1915363"/>
<dbReference type="CTD" id="10920"/>
<dbReference type="MGI" id="MGI:1915363">
    <property type="gene designation" value="Cops8"/>
</dbReference>
<dbReference type="VEuPathDB" id="HostDB:ENSMUSG00000034432"/>
<dbReference type="eggNOG" id="KOG4414">
    <property type="taxonomic scope" value="Eukaryota"/>
</dbReference>
<dbReference type="GeneTree" id="ENSGT00390000000977"/>
<dbReference type="HOGENOM" id="CLU_098091_1_1_1"/>
<dbReference type="InParanoid" id="Q8VBV7"/>
<dbReference type="OMA" id="MRIPDKL"/>
<dbReference type="OrthoDB" id="5351233at2759"/>
<dbReference type="PhylomeDB" id="Q8VBV7"/>
<dbReference type="TreeFam" id="TF101150"/>
<dbReference type="Reactome" id="R-MMU-5696394">
    <property type="pathway name" value="DNA Damage Recognition in GG-NER"/>
</dbReference>
<dbReference type="Reactome" id="R-MMU-6781823">
    <property type="pathway name" value="Formation of TC-NER Pre-Incision Complex"/>
</dbReference>
<dbReference type="Reactome" id="R-MMU-8856825">
    <property type="pathway name" value="Cargo recognition for clathrin-mediated endocytosis"/>
</dbReference>
<dbReference type="Reactome" id="R-MMU-8951664">
    <property type="pathway name" value="Neddylation"/>
</dbReference>
<dbReference type="BioGRID-ORCS" id="108679">
    <property type="hits" value="14 hits in 78 CRISPR screens"/>
</dbReference>
<dbReference type="ChiTaRS" id="Cops8">
    <property type="organism name" value="mouse"/>
</dbReference>
<dbReference type="PRO" id="PR:Q8VBV7"/>
<dbReference type="Proteomes" id="UP000000589">
    <property type="component" value="Chromosome 1"/>
</dbReference>
<dbReference type="RNAct" id="Q8VBV7">
    <property type="molecule type" value="protein"/>
</dbReference>
<dbReference type="Bgee" id="ENSMUSG00000034432">
    <property type="expression patterns" value="Expressed in spermatocyte and 273 other cell types or tissues"/>
</dbReference>
<dbReference type="ExpressionAtlas" id="Q8VBV7">
    <property type="expression patterns" value="baseline and differential"/>
</dbReference>
<dbReference type="GO" id="GO:0008180">
    <property type="term" value="C:COP9 signalosome"/>
    <property type="evidence" value="ECO:0000314"/>
    <property type="project" value="MGI"/>
</dbReference>
<dbReference type="GO" id="GO:0005829">
    <property type="term" value="C:cytosol"/>
    <property type="evidence" value="ECO:0007669"/>
    <property type="project" value="Ensembl"/>
</dbReference>
<dbReference type="GO" id="GO:0005654">
    <property type="term" value="C:nucleoplasm"/>
    <property type="evidence" value="ECO:0007669"/>
    <property type="project" value="Ensembl"/>
</dbReference>
<dbReference type="GO" id="GO:0005634">
    <property type="term" value="C:nucleus"/>
    <property type="evidence" value="ECO:0000314"/>
    <property type="project" value="MGI"/>
</dbReference>
<dbReference type="GO" id="GO:0048471">
    <property type="term" value="C:perinuclear region of cytoplasm"/>
    <property type="evidence" value="ECO:0007669"/>
    <property type="project" value="Ensembl"/>
</dbReference>
<dbReference type="GO" id="GO:0010387">
    <property type="term" value="P:COP9 signalosome assembly"/>
    <property type="evidence" value="ECO:0007669"/>
    <property type="project" value="InterPro"/>
</dbReference>
<dbReference type="GO" id="GO:0008285">
    <property type="term" value="P:negative regulation of cell population proliferation"/>
    <property type="evidence" value="ECO:0007669"/>
    <property type="project" value="Ensembl"/>
</dbReference>
<dbReference type="GO" id="GO:0000338">
    <property type="term" value="P:protein deneddylation"/>
    <property type="evidence" value="ECO:0007669"/>
    <property type="project" value="Ensembl"/>
</dbReference>
<dbReference type="FunFam" id="1.25.40.990:FF:000011">
    <property type="entry name" value="COP9 signalosome complex subunit 8-like Protein"/>
    <property type="match status" value="1"/>
</dbReference>
<dbReference type="Gene3D" id="1.25.40.990">
    <property type="match status" value="1"/>
</dbReference>
<dbReference type="InterPro" id="IPR033205">
    <property type="entry name" value="COP9_CSN8"/>
</dbReference>
<dbReference type="InterPro" id="IPR033464">
    <property type="entry name" value="CSN8_PSD8_EIF3K"/>
</dbReference>
<dbReference type="InterPro" id="IPR000717">
    <property type="entry name" value="PCI_dom"/>
</dbReference>
<dbReference type="PANTHER" id="PTHR13339">
    <property type="entry name" value="COP9 SIGNALOSOME COMPLEX SUBUNIT 8"/>
    <property type="match status" value="1"/>
</dbReference>
<dbReference type="PANTHER" id="PTHR13339:SF0">
    <property type="entry name" value="COP9 SIGNALOSOME COMPLEX SUBUNIT 8"/>
    <property type="match status" value="1"/>
</dbReference>
<dbReference type="Pfam" id="PF10075">
    <property type="entry name" value="CSN8_PSD8_EIF3K"/>
    <property type="match status" value="1"/>
</dbReference>
<dbReference type="PROSITE" id="PS50250">
    <property type="entry name" value="PCI"/>
    <property type="match status" value="1"/>
</dbReference>
<protein>
    <recommendedName>
        <fullName>COP9 signalosome complex subunit 8</fullName>
        <shortName>SGN8</shortName>
        <shortName>Signalosome subunit 8</shortName>
    </recommendedName>
    <alternativeName>
        <fullName>COP9 homolog</fullName>
    </alternativeName>
    <alternativeName>
        <fullName>JAB1-containing signalosome subunit 8</fullName>
    </alternativeName>
</protein>
<sequence length="209" mass="23256">MPVAVMADNAFSFRKLLDQCENQELEAPGGIATPPVYGQLLALYLLQNDMNNARYLWKRIPPAIKSANSELGGIWSVGQRIWQRDFPGIYTTINAHQWSETVQPIMEALRDATRRRAFALVSQAYTSIIADDFAAFVGLPVEEAVKGVLEQGWQADSTTRMVLPRKPASGTLDVSLNRFIPLSEPAPVPPIPNEQQLARLTDYVAFLEN</sequence>
<organism>
    <name type="scientific">Mus musculus</name>
    <name type="common">Mouse</name>
    <dbReference type="NCBI Taxonomy" id="10090"/>
    <lineage>
        <taxon>Eukaryota</taxon>
        <taxon>Metazoa</taxon>
        <taxon>Chordata</taxon>
        <taxon>Craniata</taxon>
        <taxon>Vertebrata</taxon>
        <taxon>Euteleostomi</taxon>
        <taxon>Mammalia</taxon>
        <taxon>Eutheria</taxon>
        <taxon>Euarchontoglires</taxon>
        <taxon>Glires</taxon>
        <taxon>Rodentia</taxon>
        <taxon>Myomorpha</taxon>
        <taxon>Muroidea</taxon>
        <taxon>Muridae</taxon>
        <taxon>Murinae</taxon>
        <taxon>Mus</taxon>
        <taxon>Mus</taxon>
    </lineage>
</organism>
<gene>
    <name type="primary">Cops8</name>
    <name type="synonym">Csn8</name>
</gene>
<accession>Q8VBV7</accession>
<accession>Q3TRS9</accession>
<accession>Q80XF4</accession>
<accession>Q8R4D2</accession>
<feature type="chain" id="PRO_0000121008" description="COP9 signalosome complex subunit 8">
    <location>
        <begin position="1"/>
        <end position="209"/>
    </location>
</feature>
<feature type="domain" description="PCI" evidence="3">
    <location>
        <begin position="8"/>
        <end position="179"/>
    </location>
</feature>
<feature type="modified residue" description="Phosphoserine" evidence="2">
    <location>
        <position position="175"/>
    </location>
</feature>
<feature type="sequence conflict" description="In Ref. 1; AAL89689." evidence="6" ref="1">
    <original>N</original>
    <variation>M</variation>
    <location>
        <position position="193"/>
    </location>
</feature>
<feature type="sequence conflict" description="In Ref. 1; AAP13731." evidence="6" ref="1">
    <original>N</original>
    <variation>T</variation>
    <location>
        <position position="193"/>
    </location>
</feature>
<feature type="sequence conflict" description="In Ref. 1." evidence="6" ref="1">
    <original>EQ</original>
    <variation>SR</variation>
    <location>
        <begin position="194"/>
        <end position="195"/>
    </location>
</feature>